<reference key="1">
    <citation type="journal article" date="2005" name="Nucleic Acids Res.">
        <title>The genome sequence of Salmonella enterica serovar Choleraesuis, a highly invasive and resistant zoonotic pathogen.</title>
        <authorList>
            <person name="Chiu C.-H."/>
            <person name="Tang P."/>
            <person name="Chu C."/>
            <person name="Hu S."/>
            <person name="Bao Q."/>
            <person name="Yu J."/>
            <person name="Chou Y.-Y."/>
            <person name="Wang H.-S."/>
            <person name="Lee Y.-S."/>
        </authorList>
    </citation>
    <scope>NUCLEOTIDE SEQUENCE [LARGE SCALE GENOMIC DNA]</scope>
    <source>
        <strain>SC-B67</strain>
    </source>
</reference>
<comment type="function">
    <text evidence="1">Catalyzes the formation of 4-diphosphocytidyl-2-C-methyl-D-erythritol from CTP and 2-C-methyl-D-erythritol 4-phosphate (MEP).</text>
</comment>
<comment type="catalytic activity">
    <reaction evidence="1">
        <text>2-C-methyl-D-erythritol 4-phosphate + CTP + H(+) = 4-CDP-2-C-methyl-D-erythritol + diphosphate</text>
        <dbReference type="Rhea" id="RHEA:13429"/>
        <dbReference type="ChEBI" id="CHEBI:15378"/>
        <dbReference type="ChEBI" id="CHEBI:33019"/>
        <dbReference type="ChEBI" id="CHEBI:37563"/>
        <dbReference type="ChEBI" id="CHEBI:57823"/>
        <dbReference type="ChEBI" id="CHEBI:58262"/>
        <dbReference type="EC" id="2.7.7.60"/>
    </reaction>
</comment>
<comment type="pathway">
    <text evidence="1">Isoprenoid biosynthesis; isopentenyl diphosphate biosynthesis via DXP pathway; isopentenyl diphosphate from 1-deoxy-D-xylulose 5-phosphate: step 2/6.</text>
</comment>
<comment type="subunit">
    <text evidence="1">Homodimer.</text>
</comment>
<comment type="similarity">
    <text evidence="1">Belongs to the IspD/TarI cytidylyltransferase family. IspD subfamily.</text>
</comment>
<protein>
    <recommendedName>
        <fullName evidence="1">2-C-methyl-D-erythritol 4-phosphate cytidylyltransferase</fullName>
        <ecNumber evidence="1">2.7.7.60</ecNumber>
    </recommendedName>
    <alternativeName>
        <fullName evidence="1">4-diphosphocytidyl-2C-methyl-D-erythritol synthase</fullName>
    </alternativeName>
    <alternativeName>
        <fullName evidence="1">MEP cytidylyltransferase</fullName>
        <shortName evidence="1">MCT</shortName>
    </alternativeName>
</protein>
<name>ISPD_SALCH</name>
<accession>Q57KJ4</accession>
<keyword id="KW-0414">Isoprene biosynthesis</keyword>
<keyword id="KW-0548">Nucleotidyltransferase</keyword>
<keyword id="KW-0808">Transferase</keyword>
<evidence type="ECO:0000255" key="1">
    <source>
        <dbReference type="HAMAP-Rule" id="MF_00108"/>
    </source>
</evidence>
<organism>
    <name type="scientific">Salmonella choleraesuis (strain SC-B67)</name>
    <dbReference type="NCBI Taxonomy" id="321314"/>
    <lineage>
        <taxon>Bacteria</taxon>
        <taxon>Pseudomonadati</taxon>
        <taxon>Pseudomonadota</taxon>
        <taxon>Gammaproteobacteria</taxon>
        <taxon>Enterobacterales</taxon>
        <taxon>Enterobacteriaceae</taxon>
        <taxon>Salmonella</taxon>
    </lineage>
</organism>
<sequence length="236" mass="25758">MAATLLDVCAVVPAAGFGRRMQTECPKQYLSIGNKTILEHSVHALLAHPRVTRVVIAISPGDHRFAQLPLANHPQITVVDGGNERADSVLAGLQAVAEAQWVLVHDAARPCLHQDDLARLLAISENSRVGGILASPVRDTMKRGEPGKNAIAHTVERADLWHALTPQFFPRELLHDCLTRALNEGATITDEASALEYCGFHPVLVEGRADNIKVTRPEDLALAEFYLTRTIHQEKA</sequence>
<dbReference type="EC" id="2.7.7.60" evidence="1"/>
<dbReference type="EMBL" id="AE017220">
    <property type="protein sequence ID" value="AAX66768.1"/>
    <property type="molecule type" value="Genomic_DNA"/>
</dbReference>
<dbReference type="RefSeq" id="WP_000741645.1">
    <property type="nucleotide sequence ID" value="NC_006905.1"/>
</dbReference>
<dbReference type="SMR" id="Q57KJ4"/>
<dbReference type="KEGG" id="sec:SCH_2862"/>
<dbReference type="HOGENOM" id="CLU_061281_3_1_6"/>
<dbReference type="UniPathway" id="UPA00056">
    <property type="reaction ID" value="UER00093"/>
</dbReference>
<dbReference type="Proteomes" id="UP000000538">
    <property type="component" value="Chromosome"/>
</dbReference>
<dbReference type="GO" id="GO:0050518">
    <property type="term" value="F:2-C-methyl-D-erythritol 4-phosphate cytidylyltransferase activity"/>
    <property type="evidence" value="ECO:0007669"/>
    <property type="project" value="UniProtKB-UniRule"/>
</dbReference>
<dbReference type="GO" id="GO:0019288">
    <property type="term" value="P:isopentenyl diphosphate biosynthetic process, methylerythritol 4-phosphate pathway"/>
    <property type="evidence" value="ECO:0007669"/>
    <property type="project" value="UniProtKB-UniRule"/>
</dbReference>
<dbReference type="CDD" id="cd02516">
    <property type="entry name" value="CDP-ME_synthetase"/>
    <property type="match status" value="1"/>
</dbReference>
<dbReference type="FunFam" id="3.90.550.10:FF:000003">
    <property type="entry name" value="2-C-methyl-D-erythritol 4-phosphate cytidylyltransferase"/>
    <property type="match status" value="1"/>
</dbReference>
<dbReference type="Gene3D" id="3.90.550.10">
    <property type="entry name" value="Spore Coat Polysaccharide Biosynthesis Protein SpsA, Chain A"/>
    <property type="match status" value="1"/>
</dbReference>
<dbReference type="HAMAP" id="MF_00108">
    <property type="entry name" value="IspD"/>
    <property type="match status" value="1"/>
</dbReference>
<dbReference type="InterPro" id="IPR001228">
    <property type="entry name" value="IspD"/>
</dbReference>
<dbReference type="InterPro" id="IPR034683">
    <property type="entry name" value="IspD/TarI"/>
</dbReference>
<dbReference type="InterPro" id="IPR050088">
    <property type="entry name" value="IspD/TarI_cytidylyltransf_bact"/>
</dbReference>
<dbReference type="InterPro" id="IPR018294">
    <property type="entry name" value="ISPD_synthase_CS"/>
</dbReference>
<dbReference type="InterPro" id="IPR029044">
    <property type="entry name" value="Nucleotide-diphossugar_trans"/>
</dbReference>
<dbReference type="NCBIfam" id="TIGR00453">
    <property type="entry name" value="ispD"/>
    <property type="match status" value="1"/>
</dbReference>
<dbReference type="PANTHER" id="PTHR32125">
    <property type="entry name" value="2-C-METHYL-D-ERYTHRITOL 4-PHOSPHATE CYTIDYLYLTRANSFERASE, CHLOROPLASTIC"/>
    <property type="match status" value="1"/>
</dbReference>
<dbReference type="PANTHER" id="PTHR32125:SF4">
    <property type="entry name" value="2-C-METHYL-D-ERYTHRITOL 4-PHOSPHATE CYTIDYLYLTRANSFERASE, CHLOROPLASTIC"/>
    <property type="match status" value="1"/>
</dbReference>
<dbReference type="Pfam" id="PF01128">
    <property type="entry name" value="IspD"/>
    <property type="match status" value="1"/>
</dbReference>
<dbReference type="SUPFAM" id="SSF53448">
    <property type="entry name" value="Nucleotide-diphospho-sugar transferases"/>
    <property type="match status" value="1"/>
</dbReference>
<dbReference type="PROSITE" id="PS01295">
    <property type="entry name" value="ISPD"/>
    <property type="match status" value="1"/>
</dbReference>
<proteinExistence type="inferred from homology"/>
<feature type="chain" id="PRO_0000237817" description="2-C-methyl-D-erythritol 4-phosphate cytidylyltransferase">
    <location>
        <begin position="1"/>
        <end position="236"/>
    </location>
</feature>
<feature type="site" description="Transition state stabilizer" evidence="1">
    <location>
        <position position="20"/>
    </location>
</feature>
<feature type="site" description="Transition state stabilizer" evidence="1">
    <location>
        <position position="27"/>
    </location>
</feature>
<feature type="site" description="Positions MEP for the nucleophilic attack" evidence="1">
    <location>
        <position position="157"/>
    </location>
</feature>
<feature type="site" description="Positions MEP for the nucleophilic attack" evidence="1">
    <location>
        <position position="213"/>
    </location>
</feature>
<gene>
    <name evidence="1" type="primary">ispD</name>
    <name type="ordered locus">SCH_2862</name>
</gene>